<protein>
    <recommendedName>
        <fullName evidence="1">Large ribosomal subunit protein uL1</fullName>
    </recommendedName>
    <alternativeName>
        <fullName evidence="2">50S ribosomal protein L1</fullName>
    </alternativeName>
</protein>
<dbReference type="EMBL" id="CP000025">
    <property type="protein sequence ID" value="AAW35112.1"/>
    <property type="molecule type" value="Genomic_DNA"/>
</dbReference>
<dbReference type="RefSeq" id="WP_002854928.1">
    <property type="nucleotide sequence ID" value="NC_003912.7"/>
</dbReference>
<dbReference type="SMR" id="Q5HVZ2"/>
<dbReference type="KEGG" id="cjr:CJE0525"/>
<dbReference type="HOGENOM" id="CLU_062853_0_0_7"/>
<dbReference type="GO" id="GO:0022625">
    <property type="term" value="C:cytosolic large ribosomal subunit"/>
    <property type="evidence" value="ECO:0007669"/>
    <property type="project" value="TreeGrafter"/>
</dbReference>
<dbReference type="GO" id="GO:0019843">
    <property type="term" value="F:rRNA binding"/>
    <property type="evidence" value="ECO:0007669"/>
    <property type="project" value="UniProtKB-UniRule"/>
</dbReference>
<dbReference type="GO" id="GO:0003735">
    <property type="term" value="F:structural constituent of ribosome"/>
    <property type="evidence" value="ECO:0007669"/>
    <property type="project" value="InterPro"/>
</dbReference>
<dbReference type="GO" id="GO:0000049">
    <property type="term" value="F:tRNA binding"/>
    <property type="evidence" value="ECO:0007669"/>
    <property type="project" value="UniProtKB-KW"/>
</dbReference>
<dbReference type="GO" id="GO:0006417">
    <property type="term" value="P:regulation of translation"/>
    <property type="evidence" value="ECO:0007669"/>
    <property type="project" value="UniProtKB-KW"/>
</dbReference>
<dbReference type="GO" id="GO:0006412">
    <property type="term" value="P:translation"/>
    <property type="evidence" value="ECO:0007669"/>
    <property type="project" value="UniProtKB-UniRule"/>
</dbReference>
<dbReference type="CDD" id="cd00403">
    <property type="entry name" value="Ribosomal_L1"/>
    <property type="match status" value="1"/>
</dbReference>
<dbReference type="FunFam" id="3.40.50.790:FF:000001">
    <property type="entry name" value="50S ribosomal protein L1"/>
    <property type="match status" value="1"/>
</dbReference>
<dbReference type="Gene3D" id="3.30.190.20">
    <property type="match status" value="1"/>
</dbReference>
<dbReference type="Gene3D" id="3.40.50.790">
    <property type="match status" value="1"/>
</dbReference>
<dbReference type="HAMAP" id="MF_01318_B">
    <property type="entry name" value="Ribosomal_uL1_B"/>
    <property type="match status" value="1"/>
</dbReference>
<dbReference type="InterPro" id="IPR005878">
    <property type="entry name" value="Ribosom_uL1_bac-type"/>
</dbReference>
<dbReference type="InterPro" id="IPR002143">
    <property type="entry name" value="Ribosomal_uL1"/>
</dbReference>
<dbReference type="InterPro" id="IPR023674">
    <property type="entry name" value="Ribosomal_uL1-like"/>
</dbReference>
<dbReference type="InterPro" id="IPR028364">
    <property type="entry name" value="Ribosomal_uL1/biogenesis"/>
</dbReference>
<dbReference type="InterPro" id="IPR016095">
    <property type="entry name" value="Ribosomal_uL1_3-a/b-sand"/>
</dbReference>
<dbReference type="InterPro" id="IPR023673">
    <property type="entry name" value="Ribosomal_uL1_CS"/>
</dbReference>
<dbReference type="NCBIfam" id="TIGR01169">
    <property type="entry name" value="rplA_bact"/>
    <property type="match status" value="1"/>
</dbReference>
<dbReference type="PANTHER" id="PTHR36427">
    <property type="entry name" value="54S RIBOSOMAL PROTEIN L1, MITOCHONDRIAL"/>
    <property type="match status" value="1"/>
</dbReference>
<dbReference type="PANTHER" id="PTHR36427:SF3">
    <property type="entry name" value="LARGE RIBOSOMAL SUBUNIT PROTEIN UL1M"/>
    <property type="match status" value="1"/>
</dbReference>
<dbReference type="Pfam" id="PF00687">
    <property type="entry name" value="Ribosomal_L1"/>
    <property type="match status" value="1"/>
</dbReference>
<dbReference type="PIRSF" id="PIRSF002155">
    <property type="entry name" value="Ribosomal_L1"/>
    <property type="match status" value="1"/>
</dbReference>
<dbReference type="SUPFAM" id="SSF56808">
    <property type="entry name" value="Ribosomal protein L1"/>
    <property type="match status" value="1"/>
</dbReference>
<dbReference type="PROSITE" id="PS01199">
    <property type="entry name" value="RIBOSOMAL_L1"/>
    <property type="match status" value="1"/>
</dbReference>
<reference key="1">
    <citation type="journal article" date="2005" name="PLoS Biol.">
        <title>Major structural differences and novel potential virulence mechanisms from the genomes of multiple Campylobacter species.</title>
        <authorList>
            <person name="Fouts D.E."/>
            <person name="Mongodin E.F."/>
            <person name="Mandrell R.E."/>
            <person name="Miller W.G."/>
            <person name="Rasko D.A."/>
            <person name="Ravel J."/>
            <person name="Brinkac L.M."/>
            <person name="DeBoy R.T."/>
            <person name="Parker C.T."/>
            <person name="Daugherty S.C."/>
            <person name="Dodson R.J."/>
            <person name="Durkin A.S."/>
            <person name="Madupu R."/>
            <person name="Sullivan S.A."/>
            <person name="Shetty J.U."/>
            <person name="Ayodeji M.A."/>
            <person name="Shvartsbeyn A."/>
            <person name="Schatz M.C."/>
            <person name="Badger J.H."/>
            <person name="Fraser C.M."/>
            <person name="Nelson K.E."/>
        </authorList>
    </citation>
    <scope>NUCLEOTIDE SEQUENCE [LARGE SCALE GENOMIC DNA]</scope>
    <source>
        <strain>RM1221</strain>
    </source>
</reference>
<keyword id="KW-0678">Repressor</keyword>
<keyword id="KW-0687">Ribonucleoprotein</keyword>
<keyword id="KW-0689">Ribosomal protein</keyword>
<keyword id="KW-0694">RNA-binding</keyword>
<keyword id="KW-0699">rRNA-binding</keyword>
<keyword id="KW-0810">Translation regulation</keyword>
<keyword id="KW-0820">tRNA-binding</keyword>
<proteinExistence type="inferred from homology"/>
<evidence type="ECO:0000255" key="1">
    <source>
        <dbReference type="HAMAP-Rule" id="MF_01318"/>
    </source>
</evidence>
<evidence type="ECO:0000305" key="2"/>
<name>RL1_CAMJR</name>
<sequence>MAKIAKRLKELSQKIDSNKEYALSDAIDTIKTLKSAKFDETVEIALKLNVDPRHADQMVRGSVVLPAGTGKKVRVAVIAKDAKADEAKNAGADIVGSDDLVEEIQKGNMNFDVLIATPNLMGLVGKVGRILGPKGLMPNPKTGTVTMDVAQAVNNAKSGQVNFRVDKQGNIHAGLGKVSFSKEQLWDNVSTFVKAINKHKPAAAKGRYIKNAALSLTMSPSVKLETQELLDMK</sequence>
<organism>
    <name type="scientific">Campylobacter jejuni (strain RM1221)</name>
    <dbReference type="NCBI Taxonomy" id="195099"/>
    <lineage>
        <taxon>Bacteria</taxon>
        <taxon>Pseudomonadati</taxon>
        <taxon>Campylobacterota</taxon>
        <taxon>Epsilonproteobacteria</taxon>
        <taxon>Campylobacterales</taxon>
        <taxon>Campylobacteraceae</taxon>
        <taxon>Campylobacter</taxon>
    </lineage>
</organism>
<accession>Q5HVZ2</accession>
<comment type="function">
    <text evidence="1">Binds directly to 23S rRNA. The L1 stalk is quite mobile in the ribosome, and is involved in E site tRNA release.</text>
</comment>
<comment type="function">
    <text evidence="1">Protein L1 is also a translational repressor protein, it controls the translation of the L11 operon by binding to its mRNA.</text>
</comment>
<comment type="subunit">
    <text evidence="1">Part of the 50S ribosomal subunit.</text>
</comment>
<comment type="similarity">
    <text evidence="1">Belongs to the universal ribosomal protein uL1 family.</text>
</comment>
<feature type="chain" id="PRO_0000230597" description="Large ribosomal subunit protein uL1">
    <location>
        <begin position="1"/>
        <end position="233"/>
    </location>
</feature>
<gene>
    <name evidence="1" type="primary">rplA</name>
    <name type="ordered locus">CJE0525</name>
</gene>